<comment type="function">
    <text evidence="2 3 4 5">Plays an essential role in viral RNA synthesis and also a role in suppressing innate immune signaling. Acts as a polymerase cofactor in the RNA polymerase transcription and replication complexes (By similarity). Serves as nucleoprotein/NP monomer chaperone prior to the formation of the large oligomeric RNA-bound complexes (By similarity). Regulates RNA synthesis by modulating NP-RNA interactions and interacting with DYNLL1. VP35-NP interaction controls the switch between RNA-bound NP and free NP and thus the switch between genome replication and genome packaging into the nucleocapsid. Prevents establishment of cellular antiviral state, thereby suppressing host DC maturation. Acts by inhibiting host RIGI activation both by shielding dsRNA from detection and by preventing PRKRA binding to RIGI. Blocks virus-induced phosphorylation and activation of interferon regulatory factor 3/IRF3, a transcription factor critical for the induction of interferons alpha and beta. This blockage is produced through the interaction with and inhibition of host IKBKE and TBK1, producing a strong inhibition of the phosphorylation and activation of IRF3. Also inhibits the antiviral effect mediated by the host interferon-induced, double-stranded RNA-activated protein kinase EIF2AK2/PKR. Increases PIAS1-mediated SUMOylation of IRF7, thereby repressing interferon transcription (By similarity). Also acts as a suppressor of RNA silencing by interacting with host DICER1, TARBP2/TRBP and PRKRA/PACT (By similarity). As a dimer, binds and sequesters dsRNA contributing to the inhibition of interferon production (By similarity).</text>
</comment>
<comment type="subunit">
    <text evidence="2 4 5">Homodimer (By similarity). Homooligomer; via the coiled coil domain. Interacts with nucleoprotein NP and polymerase L; VP35 bridges L and NP and allows the formation of the polymerase complex. Also interacts with VP30; this interaction is regulated by VP30 phosphorylation. Interacts with host IKBKE and TBK1; the interactions lead to inhibition of cellular antiviral response by blocking necessary interactions of IKBKE and TBK1 with their substrate IRF3. Interacts with host DYNLL1; this interaction stabilizes VP35 N-terminal oligomerization domain, enhances viral RNA synthesis but does not participate in suppressing the host innate immune response. Interacts with host PRKRA; this interaction inhibits the interaction between RIGI and PRKRA. Interacts with dsRNA. Interacts with host TRIM6; this interaction plays an important role in promoting efficient viral replication. Interacts with host STAU1. Interacts with host IRF7, PIAS1 and UBE2I/UBC9; these interactions mediate the sumoylation of IRF7 and contribute to the inhibition of IFN-type I production (By similarity). Interacts with host DICER1; this interaction prevents TARBP2/TRBP binding to DICER1 and thus allows the virus to counteract host RNA silencing. Interacts with host TARBP2/TRBP and PRKRA/PACT; these interactions prevent TARBP2 and PRKRA binding to DICER1 and thus allows the virus to counteract host RNA silencing (By similarity).</text>
</comment>
<comment type="subcellular location">
    <subcellularLocation>
        <location>Virion</location>
    </subcellularLocation>
    <subcellularLocation>
        <location evidence="1">Host cytoplasm</location>
    </subcellularLocation>
</comment>
<comment type="PTM">
    <text evidence="2">Phosphorylated by host IKBKE. Phosphorylation contributes to efficient viral replication and transcription.</text>
</comment>
<comment type="PTM">
    <text evidence="2">Ubiquitinated by host TRIM6 to facilitate virus replication.</text>
</comment>
<comment type="similarity">
    <text evidence="7">Belongs to the filoviridae polymerase cofactor VP35 family.</text>
</comment>
<proteinExistence type="inferred from homology"/>
<sequence length="329" mass="36386">MYNDKLKICSGPETTGWISEQLMTGKIPVTDIFIDIDNKPDQMEVRLKPSSRSSTRTCTSSSQTEVNYVPLLKKVEDTLTMLVSATSRQNAAIEALENRLSTLESSLKPIQDMGKVISSLNRSCAEMVAKYDLLVMTTGRATSTAAAVDAYWKEHKQPPPGPALYEENALKGKIDDPNSYVPDAVQEAYKNLDSTSTLTEENFGKPYISAKDLKEIMYDHLPGFGTAFHQLVQVICKIGKDNNLLDTIHAEFQASLADGDSPQCALIQITKRVPIFQDVPPPTIHIRSRGDIPRACQKSLRPAPPSPKIDRGWVCLFKMQDGKTLGLKI</sequence>
<organism>
    <name type="scientific">Reston ebolavirus (strain Philippines-96)</name>
    <name type="common">REBOV</name>
    <name type="synonym">Reston Ebola virus</name>
    <dbReference type="NCBI Taxonomy" id="129003"/>
    <lineage>
        <taxon>Viruses</taxon>
        <taxon>Riboviria</taxon>
        <taxon>Orthornavirae</taxon>
        <taxon>Negarnaviricota</taxon>
        <taxon>Haploviricotina</taxon>
        <taxon>Monjiviricetes</taxon>
        <taxon>Mononegavirales</taxon>
        <taxon>Filoviridae</taxon>
        <taxon>Orthoebolavirus</taxon>
        <taxon>Orthoebolavirus restonense</taxon>
        <taxon>Reston ebolavirus</taxon>
    </lineage>
</organism>
<accession>Q91DE0</accession>
<evidence type="ECO:0000250" key="1"/>
<evidence type="ECO:0000250" key="2">
    <source>
        <dbReference type="UniProtKB" id="Q05127"/>
    </source>
</evidence>
<evidence type="ECO:0000250" key="3">
    <source>
        <dbReference type="UniProtKB" id="Q5XX07"/>
    </source>
</evidence>
<evidence type="ECO:0000250" key="4">
    <source>
        <dbReference type="UniProtKB" id="Q6V1Q9"/>
    </source>
</evidence>
<evidence type="ECO:0000250" key="5">
    <source>
        <dbReference type="UniProtKB" id="Q8JPY0"/>
    </source>
</evidence>
<evidence type="ECO:0000255" key="6"/>
<evidence type="ECO:0000255" key="7">
    <source>
        <dbReference type="PROSITE-ProRule" id="PRU01071"/>
    </source>
</evidence>
<gene>
    <name type="primary">VP35</name>
</gene>
<name>VP35_EBORE</name>
<organismHost>
    <name type="scientific">Homo sapiens</name>
    <name type="common">Human</name>
    <dbReference type="NCBI Taxonomy" id="9606"/>
</organismHost>
<organismHost>
    <name type="scientific">Macaca fascicularis</name>
    <name type="common">Crab-eating macaque</name>
    <name type="synonym">Cynomolgus monkey</name>
    <dbReference type="NCBI Taxonomy" id="9541"/>
</organismHost>
<organismHost>
    <name type="scientific">Pteropodinae</name>
    <dbReference type="NCBI Taxonomy" id="77225"/>
</organismHost>
<organismHost>
    <name type="scientific">Sus scrofa</name>
    <name type="common">Pig</name>
    <dbReference type="NCBI Taxonomy" id="9823"/>
</organismHost>
<reference key="1">
    <citation type="journal article" date="2001" name="Arch. Virol.">
        <title>Genome structure of Ebola virus subtype Reston: differences among Ebola subtypes.</title>
        <authorList>
            <person name="Ikegami T."/>
            <person name="Calaor A.B."/>
            <person name="Miranda M.E."/>
            <person name="Niikura M."/>
            <person name="Saijo M."/>
            <person name="Kurane I."/>
            <person name="Yoshikawa Y."/>
            <person name="Morikawa S."/>
        </authorList>
    </citation>
    <scope>NUCLEOTIDE SEQUENCE [GENOMIC RNA]</scope>
</reference>
<keyword id="KW-0175">Coiled coil</keyword>
<keyword id="KW-1035">Host cytoplasm</keyword>
<keyword id="KW-0945">Host-virus interaction</keyword>
<keyword id="KW-1224">Inhibition of host IKBKE by virus</keyword>
<keyword id="KW-1090">Inhibition of host innate immune response by virus</keyword>
<keyword id="KW-1093">Inhibition of host IRF7 by virus</keyword>
<keyword id="KW-1113">Inhibition of host RLR pathway by virus</keyword>
<keyword id="KW-1223">Inhibition of host TBK1 by virus</keyword>
<keyword id="KW-1225">Inhibition of host TLR pathway by virus</keyword>
<keyword id="KW-0922">Interferon antiviral system evasion</keyword>
<keyword id="KW-1017">Isopeptide bond</keyword>
<keyword id="KW-0597">Phosphoprotein</keyword>
<keyword id="KW-0694">RNA-binding</keyword>
<keyword id="KW-0941">Suppressor of RNA silencing</keyword>
<keyword id="KW-0804">Transcription</keyword>
<keyword id="KW-0832">Ubl conjugation</keyword>
<keyword id="KW-0899">Viral immunoevasion</keyword>
<keyword id="KW-0693">Viral RNA replication</keyword>
<keyword id="KW-0946">Virion</keyword>
<feature type="chain" id="PRO_0000245075" description="Polymerase cofactor VP35">
    <location>
        <begin position="1"/>
        <end position="329"/>
    </location>
</feature>
<feature type="domain" description="VP35 IID" evidence="7">
    <location>
        <begin position="204"/>
        <end position="329"/>
    </location>
</feature>
<feature type="coiled-coil region" evidence="6">
    <location>
        <begin position="84"/>
        <end position="112"/>
    </location>
</feature>
<feature type="modified residue" description="Phosphoserine" evidence="2">
    <location>
        <position position="194"/>
    </location>
</feature>
<feature type="modified residue" description="Phosphothreonine" evidence="2">
    <location>
        <position position="195"/>
    </location>
</feature>
<feature type="modified residue" description="Phosphothreonine" evidence="2">
    <location>
        <position position="199"/>
    </location>
</feature>
<feature type="modified residue" description="Phosphoserine" evidence="2">
    <location>
        <position position="306"/>
    </location>
</feature>
<feature type="cross-link" description="Glycyl lysine isopeptide (Lys-Gly) (interchain with G-Cter in ubiquitin)" evidence="2">
    <location>
        <position position="298"/>
    </location>
</feature>
<dbReference type="EMBL" id="AB050936">
    <property type="protein sequence ID" value="BAB69004.1"/>
    <property type="molecule type" value="Genomic_RNA"/>
</dbReference>
<dbReference type="SMR" id="Q91DE0"/>
<dbReference type="Proteomes" id="UP000002322">
    <property type="component" value="Genome"/>
</dbReference>
<dbReference type="GO" id="GO:0030430">
    <property type="term" value="C:host cell cytoplasm"/>
    <property type="evidence" value="ECO:0007669"/>
    <property type="project" value="UniProtKB-SubCell"/>
</dbReference>
<dbReference type="GO" id="GO:0044423">
    <property type="term" value="C:virion component"/>
    <property type="evidence" value="ECO:0007669"/>
    <property type="project" value="UniProtKB-KW"/>
</dbReference>
<dbReference type="GO" id="GO:0003723">
    <property type="term" value="F:RNA binding"/>
    <property type="evidence" value="ECO:0007669"/>
    <property type="project" value="UniProtKB-KW"/>
</dbReference>
<dbReference type="GO" id="GO:0039724">
    <property type="term" value="P:symbiont-mediated suppression of host cytoplasmic pattern recognition receptor signaling pathway via inhibition of IKBKE activity"/>
    <property type="evidence" value="ECO:0007669"/>
    <property type="project" value="UniProtKB-KW"/>
</dbReference>
<dbReference type="GO" id="GO:0039557">
    <property type="term" value="P:symbiont-mediated suppression of host cytoplasmic pattern recognition receptor signaling pathway via inhibition of IRF7 activity"/>
    <property type="evidence" value="ECO:0007669"/>
    <property type="project" value="UniProtKB-KW"/>
</dbReference>
<dbReference type="GO" id="GO:0039723">
    <property type="term" value="P:symbiont-mediated suppression of host cytoplasmic pattern recognition receptor signaling pathway via inhibition of TBK1 activity"/>
    <property type="evidence" value="ECO:0007669"/>
    <property type="project" value="UniProtKB-KW"/>
</dbReference>
<dbReference type="GO" id="GO:0039722">
    <property type="term" value="P:symbiont-mediated suppression of host toll-like receptor signaling pathway"/>
    <property type="evidence" value="ECO:0007669"/>
    <property type="project" value="UniProtKB-KW"/>
</dbReference>
<dbReference type="CDD" id="cd21030">
    <property type="entry name" value="V35-RBD_P-protein-C_like"/>
    <property type="match status" value="1"/>
</dbReference>
<dbReference type="FunFam" id="1.10.8.950:FF:000001">
    <property type="entry name" value="Polymerase cofactor VP35"/>
    <property type="match status" value="1"/>
</dbReference>
<dbReference type="FunFam" id="2.10.10.70:FF:000001">
    <property type="entry name" value="Polymerase cofactor VP35"/>
    <property type="match status" value="1"/>
</dbReference>
<dbReference type="Gene3D" id="2.10.10.70">
    <property type="entry name" value="Filoviridae VP35, C-terminal inhibitory domain, beta-sheet subdomain"/>
    <property type="match status" value="1"/>
</dbReference>
<dbReference type="Gene3D" id="1.10.8.950">
    <property type="entry name" value="Filoviridae VP35, C-terminal inhibitory domain, helical subdomain"/>
    <property type="match status" value="1"/>
</dbReference>
<dbReference type="InterPro" id="IPR002953">
    <property type="entry name" value="Filo_VP35"/>
</dbReference>
<dbReference type="InterPro" id="IPR031163">
    <property type="entry name" value="VP35_IID"/>
</dbReference>
<dbReference type="InterPro" id="IPR043061">
    <property type="entry name" value="VP35_IID_b-sht"/>
</dbReference>
<dbReference type="InterPro" id="IPR043060">
    <property type="entry name" value="VP35_IID_hlx"/>
</dbReference>
<dbReference type="Pfam" id="PF02097">
    <property type="entry name" value="Filo_VP35"/>
    <property type="match status" value="1"/>
</dbReference>
<dbReference type="PIRSF" id="PIRSF018326">
    <property type="entry name" value="VP35_FiloV"/>
    <property type="match status" value="1"/>
</dbReference>
<dbReference type="PRINTS" id="PR01240">
    <property type="entry name" value="FILOVP35"/>
</dbReference>
<dbReference type="PROSITE" id="PS51735">
    <property type="entry name" value="VP35_IID"/>
    <property type="match status" value="1"/>
</dbReference>
<protein>
    <recommendedName>
        <fullName>Polymerase cofactor VP35</fullName>
    </recommendedName>
</protein>